<evidence type="ECO:0000255" key="1">
    <source>
        <dbReference type="HAMAP-Rule" id="MF_00167"/>
    </source>
</evidence>
<feature type="chain" id="PRO_1000203642" description="Translational regulator CsrA">
    <location>
        <begin position="1"/>
        <end position="72"/>
    </location>
</feature>
<gene>
    <name evidence="1" type="primary">csrA</name>
    <name type="ordered locus">EUBREC_0111</name>
</gene>
<name>CSRA_AGARV</name>
<dbReference type="EMBL" id="CP001107">
    <property type="protein sequence ID" value="ACR73916.1"/>
    <property type="molecule type" value="Genomic_DNA"/>
</dbReference>
<dbReference type="RefSeq" id="WP_012741037.1">
    <property type="nucleotide sequence ID" value="NC_012781.1"/>
</dbReference>
<dbReference type="SMR" id="C4Z9R8"/>
<dbReference type="STRING" id="515619.EUBREC_0111"/>
<dbReference type="PaxDb" id="515619-EUBREC_0111"/>
<dbReference type="GeneID" id="86987047"/>
<dbReference type="KEGG" id="ere:EUBREC_0111"/>
<dbReference type="HOGENOM" id="CLU_164837_0_1_9"/>
<dbReference type="Proteomes" id="UP000001477">
    <property type="component" value="Chromosome"/>
</dbReference>
<dbReference type="GO" id="GO:0005829">
    <property type="term" value="C:cytosol"/>
    <property type="evidence" value="ECO:0007669"/>
    <property type="project" value="TreeGrafter"/>
</dbReference>
<dbReference type="GO" id="GO:0048027">
    <property type="term" value="F:mRNA 5'-UTR binding"/>
    <property type="evidence" value="ECO:0007669"/>
    <property type="project" value="UniProtKB-UniRule"/>
</dbReference>
<dbReference type="GO" id="GO:0044781">
    <property type="term" value="P:bacterial-type flagellum organization"/>
    <property type="evidence" value="ECO:0007669"/>
    <property type="project" value="UniProtKB-KW"/>
</dbReference>
<dbReference type="GO" id="GO:0006402">
    <property type="term" value="P:mRNA catabolic process"/>
    <property type="evidence" value="ECO:0007669"/>
    <property type="project" value="InterPro"/>
</dbReference>
<dbReference type="GO" id="GO:0045947">
    <property type="term" value="P:negative regulation of translational initiation"/>
    <property type="evidence" value="ECO:0007669"/>
    <property type="project" value="UniProtKB-UniRule"/>
</dbReference>
<dbReference type="GO" id="GO:1902208">
    <property type="term" value="P:regulation of bacterial-type flagellum assembly"/>
    <property type="evidence" value="ECO:0007669"/>
    <property type="project" value="UniProtKB-UniRule"/>
</dbReference>
<dbReference type="GO" id="GO:0006109">
    <property type="term" value="P:regulation of carbohydrate metabolic process"/>
    <property type="evidence" value="ECO:0007669"/>
    <property type="project" value="InterPro"/>
</dbReference>
<dbReference type="FunFam" id="2.60.40.4380:FF:000002">
    <property type="entry name" value="Translational regulator CsrA"/>
    <property type="match status" value="1"/>
</dbReference>
<dbReference type="Gene3D" id="2.60.40.4380">
    <property type="entry name" value="Translational regulator CsrA"/>
    <property type="match status" value="1"/>
</dbReference>
<dbReference type="HAMAP" id="MF_00167">
    <property type="entry name" value="CsrA"/>
    <property type="match status" value="1"/>
</dbReference>
<dbReference type="InterPro" id="IPR003751">
    <property type="entry name" value="CsrA"/>
</dbReference>
<dbReference type="InterPro" id="IPR036107">
    <property type="entry name" value="CsrA_sf"/>
</dbReference>
<dbReference type="NCBIfam" id="TIGR00202">
    <property type="entry name" value="csrA"/>
    <property type="match status" value="1"/>
</dbReference>
<dbReference type="NCBIfam" id="NF002469">
    <property type="entry name" value="PRK01712.1"/>
    <property type="match status" value="1"/>
</dbReference>
<dbReference type="PANTHER" id="PTHR34984">
    <property type="entry name" value="CARBON STORAGE REGULATOR"/>
    <property type="match status" value="1"/>
</dbReference>
<dbReference type="PANTHER" id="PTHR34984:SF1">
    <property type="entry name" value="CARBON STORAGE REGULATOR"/>
    <property type="match status" value="1"/>
</dbReference>
<dbReference type="Pfam" id="PF02599">
    <property type="entry name" value="CsrA"/>
    <property type="match status" value="1"/>
</dbReference>
<dbReference type="SUPFAM" id="SSF117130">
    <property type="entry name" value="CsrA-like"/>
    <property type="match status" value="1"/>
</dbReference>
<proteinExistence type="inferred from homology"/>
<comment type="function">
    <text evidence="1">A translational regulator that binds mRNA to regulate translation initiation and/or mRNA stability. Usually binds in the 5'-UTR at or near the Shine-Dalgarno sequence preventing ribosome-binding, thus repressing translation. Its main target seems to be the major flagellin gene, while its function is anatagonized by FliW.</text>
</comment>
<comment type="subunit">
    <text evidence="1">Homodimer; the beta-strands of each monomer intercalate to form a hydrophobic core, while the alpha-helices form wings that extend away from the core.</text>
</comment>
<comment type="subcellular location">
    <subcellularLocation>
        <location evidence="1">Cytoplasm</location>
    </subcellularLocation>
</comment>
<comment type="similarity">
    <text evidence="1">Belongs to the CsrA/RsmA family.</text>
</comment>
<accession>C4Z9R8</accession>
<organism>
    <name type="scientific">Agathobacter rectalis (strain ATCC 33656 / DSM 3377 / JCM 17463 / KCTC 5835 / VPI 0990)</name>
    <name type="common">Eubacterium rectale</name>
    <dbReference type="NCBI Taxonomy" id="515619"/>
    <lineage>
        <taxon>Bacteria</taxon>
        <taxon>Bacillati</taxon>
        <taxon>Bacillota</taxon>
        <taxon>Clostridia</taxon>
        <taxon>Lachnospirales</taxon>
        <taxon>Lachnospiraceae</taxon>
        <taxon>Agathobacter</taxon>
    </lineage>
</organism>
<protein>
    <recommendedName>
        <fullName evidence="1">Translational regulator CsrA</fullName>
    </recommendedName>
</protein>
<sequence>MLALTRKKGESLVINNDIEITILEIRGDQIKLGVSAPKEVPIYRKEVYTQIQQENRKSADAQNAQALKELFG</sequence>
<reference key="1">
    <citation type="journal article" date="2009" name="Proc. Natl. Acad. Sci. U.S.A.">
        <title>Characterizing a model human gut microbiota composed of members of its two dominant bacterial phyla.</title>
        <authorList>
            <person name="Mahowald M.A."/>
            <person name="Rey F.E."/>
            <person name="Seedorf H."/>
            <person name="Turnbaugh P.J."/>
            <person name="Fulton R.S."/>
            <person name="Wollam A."/>
            <person name="Shah N."/>
            <person name="Wang C."/>
            <person name="Magrini V."/>
            <person name="Wilson R.K."/>
            <person name="Cantarel B.L."/>
            <person name="Coutinho P.M."/>
            <person name="Henrissat B."/>
            <person name="Crock L.W."/>
            <person name="Russell A."/>
            <person name="Verberkmoes N.C."/>
            <person name="Hettich R.L."/>
            <person name="Gordon J.I."/>
        </authorList>
    </citation>
    <scope>NUCLEOTIDE SEQUENCE [LARGE SCALE GENOMIC DNA]</scope>
    <source>
        <strain>ATCC 33656 / DSM 3377 / JCM 17463 / KCTC 5835 / LMG 30912 / VPI 0990</strain>
    </source>
</reference>
<keyword id="KW-1005">Bacterial flagellum biogenesis</keyword>
<keyword id="KW-0963">Cytoplasm</keyword>
<keyword id="KW-0678">Repressor</keyword>
<keyword id="KW-0694">RNA-binding</keyword>
<keyword id="KW-0810">Translation regulation</keyword>